<reference key="1">
    <citation type="journal article" date="2005" name="Gene">
        <title>The first complete chloroplast genome sequence of a lycophyte, Huperzia lucidula (Lycopodiaceae).</title>
        <authorList>
            <person name="Wolf P.G."/>
            <person name="Karol K.G."/>
            <person name="Mandoli D.F."/>
            <person name="Kuehl J.V."/>
            <person name="Arumuganathan K."/>
            <person name="Ellis M.W."/>
            <person name="Mishler B.D."/>
            <person name="Kelch D.G."/>
            <person name="Olmstead R.G."/>
            <person name="Boore J.L."/>
        </authorList>
    </citation>
    <scope>NUCLEOTIDE SEQUENCE [LARGE SCALE GENOMIC DNA]</scope>
</reference>
<name>NDHI_HUPLU</name>
<comment type="function">
    <text evidence="1">NDH shuttles electrons from NAD(P)H:plastoquinone, via FMN and iron-sulfur (Fe-S) centers, to quinones in the photosynthetic chain and possibly in a chloroplast respiratory chain. The immediate electron acceptor for the enzyme in this species is believed to be plastoquinone. Couples the redox reaction to proton translocation, and thus conserves the redox energy in a proton gradient.</text>
</comment>
<comment type="catalytic activity">
    <reaction evidence="1">
        <text>a plastoquinone + NADH + (n+1) H(+)(in) = a plastoquinol + NAD(+) + n H(+)(out)</text>
        <dbReference type="Rhea" id="RHEA:42608"/>
        <dbReference type="Rhea" id="RHEA-COMP:9561"/>
        <dbReference type="Rhea" id="RHEA-COMP:9562"/>
        <dbReference type="ChEBI" id="CHEBI:15378"/>
        <dbReference type="ChEBI" id="CHEBI:17757"/>
        <dbReference type="ChEBI" id="CHEBI:57540"/>
        <dbReference type="ChEBI" id="CHEBI:57945"/>
        <dbReference type="ChEBI" id="CHEBI:62192"/>
    </reaction>
</comment>
<comment type="catalytic activity">
    <reaction evidence="1">
        <text>a plastoquinone + NADPH + (n+1) H(+)(in) = a plastoquinol + NADP(+) + n H(+)(out)</text>
        <dbReference type="Rhea" id="RHEA:42612"/>
        <dbReference type="Rhea" id="RHEA-COMP:9561"/>
        <dbReference type="Rhea" id="RHEA-COMP:9562"/>
        <dbReference type="ChEBI" id="CHEBI:15378"/>
        <dbReference type="ChEBI" id="CHEBI:17757"/>
        <dbReference type="ChEBI" id="CHEBI:57783"/>
        <dbReference type="ChEBI" id="CHEBI:58349"/>
        <dbReference type="ChEBI" id="CHEBI:62192"/>
    </reaction>
</comment>
<comment type="cofactor">
    <cofactor evidence="1">
        <name>[4Fe-4S] cluster</name>
        <dbReference type="ChEBI" id="CHEBI:49883"/>
    </cofactor>
    <text evidence="1">Binds 2 [4Fe-4S] clusters per subunit.</text>
</comment>
<comment type="subunit">
    <text evidence="1">NDH is composed of at least 16 different subunits, 5 of which are encoded in the nucleus.</text>
</comment>
<comment type="subcellular location">
    <subcellularLocation>
        <location evidence="1">Plastid</location>
        <location evidence="1">Chloroplast thylakoid membrane</location>
        <topology evidence="1">Peripheral membrane protein</topology>
    </subcellularLocation>
</comment>
<comment type="similarity">
    <text evidence="1">Belongs to the complex I 23 kDa subunit family.</text>
</comment>
<geneLocation type="chloroplast"/>
<evidence type="ECO:0000255" key="1">
    <source>
        <dbReference type="HAMAP-Rule" id="MF_01351"/>
    </source>
</evidence>
<feature type="chain" id="PRO_0000245662" description="NAD(P)H-quinone oxidoreductase subunit I, chloroplastic">
    <location>
        <begin position="1"/>
        <end position="183"/>
    </location>
</feature>
<feature type="domain" description="4Fe-4S ferredoxin-type 1" evidence="1">
    <location>
        <begin position="55"/>
        <end position="84"/>
    </location>
</feature>
<feature type="domain" description="4Fe-4S ferredoxin-type 2" evidence="1">
    <location>
        <begin position="95"/>
        <end position="124"/>
    </location>
</feature>
<feature type="binding site" evidence="1">
    <location>
        <position position="64"/>
    </location>
    <ligand>
        <name>[4Fe-4S] cluster</name>
        <dbReference type="ChEBI" id="CHEBI:49883"/>
        <label>1</label>
    </ligand>
</feature>
<feature type="binding site" evidence="1">
    <location>
        <position position="67"/>
    </location>
    <ligand>
        <name>[4Fe-4S] cluster</name>
        <dbReference type="ChEBI" id="CHEBI:49883"/>
        <label>1</label>
    </ligand>
</feature>
<feature type="binding site" evidence="1">
    <location>
        <position position="70"/>
    </location>
    <ligand>
        <name>[4Fe-4S] cluster</name>
        <dbReference type="ChEBI" id="CHEBI:49883"/>
        <label>1</label>
    </ligand>
</feature>
<feature type="binding site" evidence="1">
    <location>
        <position position="74"/>
    </location>
    <ligand>
        <name>[4Fe-4S] cluster</name>
        <dbReference type="ChEBI" id="CHEBI:49883"/>
        <label>2</label>
    </ligand>
</feature>
<feature type="binding site" evidence="1">
    <location>
        <position position="104"/>
    </location>
    <ligand>
        <name>[4Fe-4S] cluster</name>
        <dbReference type="ChEBI" id="CHEBI:49883"/>
        <label>2</label>
    </ligand>
</feature>
<feature type="binding site" evidence="1">
    <location>
        <position position="107"/>
    </location>
    <ligand>
        <name>[4Fe-4S] cluster</name>
        <dbReference type="ChEBI" id="CHEBI:49883"/>
        <label>2</label>
    </ligand>
</feature>
<feature type="binding site" evidence="1">
    <location>
        <position position="110"/>
    </location>
    <ligand>
        <name>[4Fe-4S] cluster</name>
        <dbReference type="ChEBI" id="CHEBI:49883"/>
        <label>2</label>
    </ligand>
</feature>
<feature type="binding site" evidence="1">
    <location>
        <position position="114"/>
    </location>
    <ligand>
        <name>[4Fe-4S] cluster</name>
        <dbReference type="ChEBI" id="CHEBI:49883"/>
        <label>1</label>
    </ligand>
</feature>
<proteinExistence type="inferred from homology"/>
<dbReference type="EC" id="7.1.1.-" evidence="1"/>
<dbReference type="EMBL" id="AY660566">
    <property type="protein sequence ID" value="AAT80759.1"/>
    <property type="molecule type" value="Genomic_DNA"/>
</dbReference>
<dbReference type="RefSeq" id="YP_209563.1">
    <property type="nucleotide sequence ID" value="NC_006861.1"/>
</dbReference>
<dbReference type="SMR" id="Q5SCZ1"/>
<dbReference type="GeneID" id="3283828"/>
<dbReference type="GO" id="GO:0009535">
    <property type="term" value="C:chloroplast thylakoid membrane"/>
    <property type="evidence" value="ECO:0007669"/>
    <property type="project" value="UniProtKB-SubCell"/>
</dbReference>
<dbReference type="GO" id="GO:0051539">
    <property type="term" value="F:4 iron, 4 sulfur cluster binding"/>
    <property type="evidence" value="ECO:0007669"/>
    <property type="project" value="UniProtKB-KW"/>
</dbReference>
<dbReference type="GO" id="GO:0005506">
    <property type="term" value="F:iron ion binding"/>
    <property type="evidence" value="ECO:0007669"/>
    <property type="project" value="UniProtKB-UniRule"/>
</dbReference>
<dbReference type="GO" id="GO:0008137">
    <property type="term" value="F:NADH dehydrogenase (ubiquinone) activity"/>
    <property type="evidence" value="ECO:0007669"/>
    <property type="project" value="InterPro"/>
</dbReference>
<dbReference type="GO" id="GO:0048038">
    <property type="term" value="F:quinone binding"/>
    <property type="evidence" value="ECO:0007669"/>
    <property type="project" value="UniProtKB-KW"/>
</dbReference>
<dbReference type="GO" id="GO:0019684">
    <property type="term" value="P:photosynthesis, light reaction"/>
    <property type="evidence" value="ECO:0007669"/>
    <property type="project" value="UniProtKB-UniRule"/>
</dbReference>
<dbReference type="Gene3D" id="3.30.70.3270">
    <property type="match status" value="1"/>
</dbReference>
<dbReference type="HAMAP" id="MF_01351">
    <property type="entry name" value="NDH1_NuoI"/>
    <property type="match status" value="1"/>
</dbReference>
<dbReference type="InterPro" id="IPR017896">
    <property type="entry name" value="4Fe4S_Fe-S-bd"/>
</dbReference>
<dbReference type="InterPro" id="IPR017900">
    <property type="entry name" value="4Fe4S_Fe_S_CS"/>
</dbReference>
<dbReference type="InterPro" id="IPR010226">
    <property type="entry name" value="NADH_quinone_OxRdtase_chainI"/>
</dbReference>
<dbReference type="InterPro" id="IPR004497">
    <property type="entry name" value="NDHI"/>
</dbReference>
<dbReference type="NCBIfam" id="TIGR00403">
    <property type="entry name" value="ndhI"/>
    <property type="match status" value="1"/>
</dbReference>
<dbReference type="NCBIfam" id="TIGR01971">
    <property type="entry name" value="NuoI"/>
    <property type="match status" value="1"/>
</dbReference>
<dbReference type="NCBIfam" id="NF004537">
    <property type="entry name" value="PRK05888.1-3"/>
    <property type="match status" value="1"/>
</dbReference>
<dbReference type="PANTHER" id="PTHR47275">
    <property type="entry name" value="NAD(P)H-QUINONE OXIDOREDUCTASE SUBUNIT I, CHLOROPLASTIC"/>
    <property type="match status" value="1"/>
</dbReference>
<dbReference type="PANTHER" id="PTHR47275:SF1">
    <property type="entry name" value="NAD(P)H-QUINONE OXIDOREDUCTASE SUBUNIT I, CHLOROPLASTIC"/>
    <property type="match status" value="1"/>
</dbReference>
<dbReference type="Pfam" id="PF12838">
    <property type="entry name" value="Fer4_7"/>
    <property type="match status" value="1"/>
</dbReference>
<dbReference type="SUPFAM" id="SSF54862">
    <property type="entry name" value="4Fe-4S ferredoxins"/>
    <property type="match status" value="1"/>
</dbReference>
<dbReference type="PROSITE" id="PS00198">
    <property type="entry name" value="4FE4S_FER_1"/>
    <property type="match status" value="2"/>
</dbReference>
<dbReference type="PROSITE" id="PS51379">
    <property type="entry name" value="4FE4S_FER_2"/>
    <property type="match status" value="2"/>
</dbReference>
<sequence length="183" mass="20972">MFSMVEGLQVYGQQTIQAAKYIGQGFMVTLDHMNRLPMTVQYPYEKLIPSERFRGRIHFEFDKCIACEVCVRVCPINLPVVDWEFEKNIRKKQLTSYSIDFGVCIFCGNCVEYCPTNCLSMTEEYELSTYDRHELNHDQIALGRLPLSVVEDSTIRVISGLTKLPKGTMDGHSASKNVTNFLH</sequence>
<keyword id="KW-0004">4Fe-4S</keyword>
<keyword id="KW-0150">Chloroplast</keyword>
<keyword id="KW-0408">Iron</keyword>
<keyword id="KW-0411">Iron-sulfur</keyword>
<keyword id="KW-0472">Membrane</keyword>
<keyword id="KW-0479">Metal-binding</keyword>
<keyword id="KW-0520">NAD</keyword>
<keyword id="KW-0521">NADP</keyword>
<keyword id="KW-0934">Plastid</keyword>
<keyword id="KW-0618">Plastoquinone</keyword>
<keyword id="KW-0874">Quinone</keyword>
<keyword id="KW-0677">Repeat</keyword>
<keyword id="KW-0793">Thylakoid</keyword>
<keyword id="KW-1278">Translocase</keyword>
<accession>Q5SCZ1</accession>
<organism>
    <name type="scientific">Huperzia lucidula</name>
    <name type="common">Shining clubmoss</name>
    <name type="synonym">Lycopodium lucidulum</name>
    <dbReference type="NCBI Taxonomy" id="37429"/>
    <lineage>
        <taxon>Eukaryota</taxon>
        <taxon>Viridiplantae</taxon>
        <taxon>Streptophyta</taxon>
        <taxon>Embryophyta</taxon>
        <taxon>Tracheophyta</taxon>
        <taxon>Lycopodiopsida</taxon>
        <taxon>Lycopodiales</taxon>
        <taxon>Lycopodiaceae</taxon>
        <taxon>Huperzioideae</taxon>
        <taxon>Huperzia</taxon>
    </lineage>
</organism>
<protein>
    <recommendedName>
        <fullName evidence="1">NAD(P)H-quinone oxidoreductase subunit I, chloroplastic</fullName>
        <ecNumber evidence="1">7.1.1.-</ecNumber>
    </recommendedName>
    <alternativeName>
        <fullName evidence="1">NAD(P)H dehydrogenase subunit I</fullName>
        <shortName evidence="1">NDH subunit I</shortName>
    </alternativeName>
    <alternativeName>
        <fullName evidence="1">NADH-plastoquinone oxidoreductase subunit I</fullName>
    </alternativeName>
</protein>
<gene>
    <name evidence="1" type="primary">ndhI</name>
</gene>